<accession>Q864H9</accession>
<sequence>MPMQGAQRKLLGSLNSTPTATSNLGLAANHTGAPCLEVSIPDGLFLSLGLVSLVENVLVVAAIAKNRNLHSSMYCFICCLALSDLLVSGSNMLETAIILLLEAGTLATRASVVQQLHNTIDVLTCSSMLCSLCFLGAIAVDRYISIFYALRYHSIMTLPRAQRAIAAIWVTSVLSSTLFITYYDHAAVLLCLVVFFLAMLVLMAVLYVHMLARACQHAQGIIRLHNRQLPAHKGFGLRGAATLTILLGIFFLCWGPFFLHLTLVVFCPQHLTCNCIFKNFKVFLTLIICNTIIDPLIYAFRSQELRRTLKEVLLCSWWPGCGAEGGGDSVWPGSCVTLRGPLPP</sequence>
<gene>
    <name type="primary">MC1R</name>
</gene>
<feature type="chain" id="PRO_0000069794" description="Melanocyte-stimulating hormone receptor">
    <location>
        <begin position="1"/>
        <end position="344"/>
    </location>
</feature>
<feature type="topological domain" description="Extracellular" evidence="2">
    <location>
        <begin position="1"/>
        <end position="37"/>
    </location>
</feature>
<feature type="transmembrane region" description="Helical; Name=1" evidence="2">
    <location>
        <begin position="38"/>
        <end position="63"/>
    </location>
</feature>
<feature type="topological domain" description="Cytoplasmic" evidence="2">
    <location>
        <begin position="64"/>
        <end position="72"/>
    </location>
</feature>
<feature type="transmembrane region" description="Helical; Name=2" evidence="2">
    <location>
        <begin position="73"/>
        <end position="93"/>
    </location>
</feature>
<feature type="topological domain" description="Extracellular" evidence="2">
    <location>
        <begin position="94"/>
        <end position="118"/>
    </location>
</feature>
<feature type="transmembrane region" description="Helical; Name=3" evidence="2">
    <location>
        <begin position="119"/>
        <end position="140"/>
    </location>
</feature>
<feature type="topological domain" description="Cytoplasmic" evidence="2">
    <location>
        <begin position="141"/>
        <end position="163"/>
    </location>
</feature>
<feature type="transmembrane region" description="Helical; Name=4" evidence="2">
    <location>
        <begin position="164"/>
        <end position="183"/>
    </location>
</feature>
<feature type="topological domain" description="Extracellular" evidence="2">
    <location>
        <begin position="184"/>
        <end position="191"/>
    </location>
</feature>
<feature type="transmembrane region" description="Helical; Name=5" evidence="2">
    <location>
        <begin position="192"/>
        <end position="211"/>
    </location>
</feature>
<feature type="topological domain" description="Cytoplasmic" evidence="2">
    <location>
        <begin position="212"/>
        <end position="240"/>
    </location>
</feature>
<feature type="transmembrane region" description="Helical; Name=6" evidence="2">
    <location>
        <begin position="241"/>
        <end position="266"/>
    </location>
</feature>
<feature type="topological domain" description="Extracellular" evidence="2">
    <location>
        <begin position="267"/>
        <end position="279"/>
    </location>
</feature>
<feature type="transmembrane region" description="Helical; Name=7" evidence="2">
    <location>
        <begin position="280"/>
        <end position="300"/>
    </location>
</feature>
<feature type="topological domain" description="Cytoplasmic" evidence="2">
    <location>
        <begin position="301"/>
        <end position="344"/>
    </location>
</feature>
<feature type="lipid moiety-binding region" description="S-palmitoyl cysteine" evidence="2">
    <location>
        <position position="315"/>
    </location>
</feature>
<feature type="glycosylation site" description="N-linked (GlcNAc...) asparagine" evidence="2">
    <location>
        <position position="29"/>
    </location>
</feature>
<reference key="1">
    <citation type="journal article" date="2003" name="Am. J. Phys. Anthropol.">
        <title>Evolution of a pigmentation gene, the melanocortin-1 receptor, in primates.</title>
        <authorList>
            <person name="Mundy N.I."/>
            <person name="Kelly J."/>
        </authorList>
    </citation>
    <scope>NUCLEOTIDE SEQUENCE [GENOMIC DNA]</scope>
    <source>
        <strain>Isolate 2</strain>
    </source>
</reference>
<evidence type="ECO:0000250" key="1">
    <source>
        <dbReference type="UniProtKB" id="Q01726"/>
    </source>
</evidence>
<evidence type="ECO:0000255" key="2"/>
<evidence type="ECO:0000255" key="3">
    <source>
        <dbReference type="PROSITE-ProRule" id="PRU00521"/>
    </source>
</evidence>
<organism>
    <name type="scientific">Mico argentatus</name>
    <name type="common">Silvery marmoset</name>
    <name type="synonym">Callithrix argentata</name>
    <dbReference type="NCBI Taxonomy" id="9482"/>
    <lineage>
        <taxon>Eukaryota</taxon>
        <taxon>Metazoa</taxon>
        <taxon>Chordata</taxon>
        <taxon>Craniata</taxon>
        <taxon>Vertebrata</taxon>
        <taxon>Euteleostomi</taxon>
        <taxon>Mammalia</taxon>
        <taxon>Eutheria</taxon>
        <taxon>Euarchontoglires</taxon>
        <taxon>Primates</taxon>
        <taxon>Haplorrhini</taxon>
        <taxon>Platyrrhini</taxon>
        <taxon>Cebidae</taxon>
        <taxon>Callitrichinae</taxon>
        <taxon>Mico</taxon>
    </lineage>
</organism>
<keyword id="KW-1003">Cell membrane</keyword>
<keyword id="KW-0297">G-protein coupled receptor</keyword>
<keyword id="KW-0325">Glycoprotein</keyword>
<keyword id="KW-0449">Lipoprotein</keyword>
<keyword id="KW-0472">Membrane</keyword>
<keyword id="KW-0564">Palmitate</keyword>
<keyword id="KW-0675">Receptor</keyword>
<keyword id="KW-0807">Transducer</keyword>
<keyword id="KW-0812">Transmembrane</keyword>
<keyword id="KW-1133">Transmembrane helix</keyword>
<dbReference type="EMBL" id="AY205118">
    <property type="protein sequence ID" value="AAP30992.1"/>
    <property type="molecule type" value="Genomic_DNA"/>
</dbReference>
<dbReference type="SMR" id="Q864H9"/>
<dbReference type="GlyCosmos" id="Q864H9">
    <property type="glycosylation" value="1 site, No reported glycans"/>
</dbReference>
<dbReference type="GO" id="GO:0005886">
    <property type="term" value="C:plasma membrane"/>
    <property type="evidence" value="ECO:0000250"/>
    <property type="project" value="UniProtKB"/>
</dbReference>
<dbReference type="GO" id="GO:0004980">
    <property type="term" value="F:melanocyte-stimulating hormone receptor activity"/>
    <property type="evidence" value="ECO:0007669"/>
    <property type="project" value="InterPro"/>
</dbReference>
<dbReference type="GO" id="GO:0007189">
    <property type="term" value="P:adenylate cyclase-activating G protein-coupled receptor signaling pathway"/>
    <property type="evidence" value="ECO:0007669"/>
    <property type="project" value="UniProtKB-ARBA"/>
</dbReference>
<dbReference type="CDD" id="cd15351">
    <property type="entry name" value="7tmA_MC1R"/>
    <property type="match status" value="1"/>
</dbReference>
<dbReference type="FunFam" id="1.20.1070.10:FF:000211">
    <property type="entry name" value="Melanocyte-stimulating hormone receptor"/>
    <property type="match status" value="1"/>
</dbReference>
<dbReference type="Gene3D" id="1.20.1070.10">
    <property type="entry name" value="Rhodopsin 7-helix transmembrane proteins"/>
    <property type="match status" value="1"/>
</dbReference>
<dbReference type="InterPro" id="IPR000276">
    <property type="entry name" value="GPCR_Rhodpsn"/>
</dbReference>
<dbReference type="InterPro" id="IPR017452">
    <property type="entry name" value="GPCR_Rhodpsn_7TM"/>
</dbReference>
<dbReference type="InterPro" id="IPR001671">
    <property type="entry name" value="Melcrt_ACTH_rcpt"/>
</dbReference>
<dbReference type="InterPro" id="IPR000761">
    <property type="entry name" value="MSH_rcpt"/>
</dbReference>
<dbReference type="PANTHER" id="PTHR22750">
    <property type="entry name" value="G-PROTEIN COUPLED RECEPTOR"/>
    <property type="match status" value="1"/>
</dbReference>
<dbReference type="Pfam" id="PF00001">
    <property type="entry name" value="7tm_1"/>
    <property type="match status" value="1"/>
</dbReference>
<dbReference type="PRINTS" id="PR00237">
    <property type="entry name" value="GPCRRHODOPSN"/>
</dbReference>
<dbReference type="PRINTS" id="PR00534">
    <property type="entry name" value="MCRFAMILY"/>
</dbReference>
<dbReference type="PRINTS" id="PR00536">
    <property type="entry name" value="MELNOCYTESHR"/>
</dbReference>
<dbReference type="SMART" id="SM01381">
    <property type="entry name" value="7TM_GPCR_Srsx"/>
    <property type="match status" value="1"/>
</dbReference>
<dbReference type="SUPFAM" id="SSF81321">
    <property type="entry name" value="Family A G protein-coupled receptor-like"/>
    <property type="match status" value="1"/>
</dbReference>
<dbReference type="PROSITE" id="PS00237">
    <property type="entry name" value="G_PROTEIN_RECEP_F1_1"/>
    <property type="match status" value="1"/>
</dbReference>
<dbReference type="PROSITE" id="PS50262">
    <property type="entry name" value="G_PROTEIN_RECEP_F1_2"/>
    <property type="match status" value="1"/>
</dbReference>
<name>MSHR_MICAD</name>
<proteinExistence type="inferred from homology"/>
<comment type="function">
    <text evidence="1">Receptor for MSH (alpha, beta and gamma) and ACTH. The activity of this receptor is mediated by G proteins which activate adenylate cyclase. Mediates melanogenesis, the production of eumelanin (black/brown) and phaeomelanin (red/yellow), via regulation of cAMP signaling in melanocytes.</text>
</comment>
<comment type="subunit">
    <text evidence="1">Interacts with MGRN1, but does not undergo MGRN1-mediated ubiquitination; this interaction competes with GNAS-binding and thus inhibits agonist-induced cAMP production. Interacts with OPN3; the interaction results in a decrease in MC1R-mediated cAMP signaling and ultimately a decrease in melanin production in melanocytes.</text>
</comment>
<comment type="subcellular location">
    <subcellularLocation>
        <location evidence="1">Cell membrane</location>
        <topology evidence="2">Multi-pass membrane protein</topology>
    </subcellularLocation>
</comment>
<comment type="similarity">
    <text evidence="3">Belongs to the G-protein coupled receptor 1 family.</text>
</comment>
<protein>
    <recommendedName>
        <fullName>Melanocyte-stimulating hormone receptor</fullName>
        <shortName>MSH-R</shortName>
    </recommendedName>
    <alternativeName>
        <fullName>Melanocortin receptor 1</fullName>
        <shortName>MC1-R</shortName>
    </alternativeName>
</protein>